<protein>
    <recommendedName>
        <fullName>Uncharacterized protein Rv1507c</fullName>
    </recommendedName>
</protein>
<dbReference type="EMBL" id="AL123456">
    <property type="protein sequence ID" value="CCP44269.1"/>
    <property type="molecule type" value="Genomic_DNA"/>
</dbReference>
<dbReference type="PIR" id="F70713">
    <property type="entry name" value="F70713"/>
</dbReference>
<dbReference type="RefSeq" id="NP_216023.1">
    <property type="nucleotide sequence ID" value="NC_000962.3"/>
</dbReference>
<dbReference type="RefSeq" id="WP_003407623.1">
    <property type="nucleotide sequence ID" value="NZ_NVQJ01000004.1"/>
</dbReference>
<dbReference type="STRING" id="83332.Rv1507c"/>
<dbReference type="PaxDb" id="83332-Rv1507c"/>
<dbReference type="DNASU" id="886477"/>
<dbReference type="GeneID" id="886477"/>
<dbReference type="KEGG" id="mtu:Rv1507c"/>
<dbReference type="KEGG" id="mtv:RVBD_1507c"/>
<dbReference type="TubercuList" id="Rv1507c"/>
<dbReference type="eggNOG" id="COG0224">
    <property type="taxonomic scope" value="Bacteria"/>
</dbReference>
<dbReference type="InParanoid" id="P9WLW5"/>
<dbReference type="OrthoDB" id="3611744at2"/>
<dbReference type="PhylomeDB" id="P9WLW5"/>
<dbReference type="Proteomes" id="UP000001584">
    <property type="component" value="Chromosome"/>
</dbReference>
<dbReference type="GO" id="GO:0005886">
    <property type="term" value="C:plasma membrane"/>
    <property type="evidence" value="ECO:0007005"/>
    <property type="project" value="MTBBASE"/>
</dbReference>
<dbReference type="InterPro" id="IPR014985">
    <property type="entry name" value="WbqC"/>
</dbReference>
<dbReference type="Pfam" id="PF08889">
    <property type="entry name" value="WbqC"/>
    <property type="match status" value="1"/>
</dbReference>
<feature type="chain" id="PRO_0000103862" description="Uncharacterized protein Rv1507c">
    <location>
        <begin position="1"/>
        <end position="231"/>
    </location>
</feature>
<accession>P9WLW5</accession>
<accession>L0T9M0</accession>
<accession>P71786</accession>
<keyword id="KW-1185">Reference proteome</keyword>
<name>Y1507_MYCTU</name>
<proteinExistence type="evidence at protein level"/>
<organism>
    <name type="scientific">Mycobacterium tuberculosis (strain ATCC 25618 / H37Rv)</name>
    <dbReference type="NCBI Taxonomy" id="83332"/>
    <lineage>
        <taxon>Bacteria</taxon>
        <taxon>Bacillati</taxon>
        <taxon>Actinomycetota</taxon>
        <taxon>Actinomycetes</taxon>
        <taxon>Mycobacteriales</taxon>
        <taxon>Mycobacteriaceae</taxon>
        <taxon>Mycobacterium</taxon>
        <taxon>Mycobacterium tuberculosis complex</taxon>
    </lineage>
</organism>
<gene>
    <name type="ordered locus">Rv1507c</name>
    <name type="ORF">MTCY277.29c</name>
</gene>
<reference key="1">
    <citation type="journal article" date="1998" name="Nature">
        <title>Deciphering the biology of Mycobacterium tuberculosis from the complete genome sequence.</title>
        <authorList>
            <person name="Cole S.T."/>
            <person name="Brosch R."/>
            <person name="Parkhill J."/>
            <person name="Garnier T."/>
            <person name="Churcher C.M."/>
            <person name="Harris D.E."/>
            <person name="Gordon S.V."/>
            <person name="Eiglmeier K."/>
            <person name="Gas S."/>
            <person name="Barry C.E. III"/>
            <person name="Tekaia F."/>
            <person name="Badcock K."/>
            <person name="Basham D."/>
            <person name="Brown D."/>
            <person name="Chillingworth T."/>
            <person name="Connor R."/>
            <person name="Davies R.M."/>
            <person name="Devlin K."/>
            <person name="Feltwell T."/>
            <person name="Gentles S."/>
            <person name="Hamlin N."/>
            <person name="Holroyd S."/>
            <person name="Hornsby T."/>
            <person name="Jagels K."/>
            <person name="Krogh A."/>
            <person name="McLean J."/>
            <person name="Moule S."/>
            <person name="Murphy L.D."/>
            <person name="Oliver S."/>
            <person name="Osborne J."/>
            <person name="Quail M.A."/>
            <person name="Rajandream M.A."/>
            <person name="Rogers J."/>
            <person name="Rutter S."/>
            <person name="Seeger K."/>
            <person name="Skelton S."/>
            <person name="Squares S."/>
            <person name="Squares R."/>
            <person name="Sulston J.E."/>
            <person name="Taylor K."/>
            <person name="Whitehead S."/>
            <person name="Barrell B.G."/>
        </authorList>
    </citation>
    <scope>NUCLEOTIDE SEQUENCE [LARGE SCALE GENOMIC DNA]</scope>
    <source>
        <strain>ATCC 25618 / H37Rv</strain>
    </source>
</reference>
<reference key="2">
    <citation type="journal article" date="2011" name="Mol. Cell. Proteomics">
        <title>Proteogenomic analysis of Mycobacterium tuberculosis by high resolution mass spectrometry.</title>
        <authorList>
            <person name="Kelkar D.S."/>
            <person name="Kumar D."/>
            <person name="Kumar P."/>
            <person name="Balakrishnan L."/>
            <person name="Muthusamy B."/>
            <person name="Yadav A.K."/>
            <person name="Shrivastava P."/>
            <person name="Marimuthu A."/>
            <person name="Anand S."/>
            <person name="Sundaram H."/>
            <person name="Kingsbury R."/>
            <person name="Harsha H.C."/>
            <person name="Nair B."/>
            <person name="Prasad T.S."/>
            <person name="Chauhan D.S."/>
            <person name="Katoch K."/>
            <person name="Katoch V.M."/>
            <person name="Kumar P."/>
            <person name="Chaerkady R."/>
            <person name="Ramachandran S."/>
            <person name="Dash D."/>
            <person name="Pandey A."/>
        </authorList>
    </citation>
    <scope>IDENTIFICATION BY MASS SPECTROMETRY [LARGE SCALE ANALYSIS]</scope>
    <source>
        <strain>ATCC 25618 / H37Rv</strain>
    </source>
</reference>
<sequence>MKKVAIVQSNYIPWRGYFDLIAFVDEFIIYDDMQYTKRDWRNRNRIKTSQGLQWITVPVQVKGRFHQKIRETLIDGTDWAKAHWRALEFNYSAAAHFAEIADWLAPIYLEEQHTNLSLLNRRLLNAICSYLGISTRLANSWDYELADGKTERLANLCQQAAATEYVSGPSARSYVDERVFDELSIRVTWFDYDGYRDYKQLWGGFEPAVSILDLLFNVGAEAPDYLRYCRQ</sequence>